<feature type="chain" id="PRO_0000102393" description="Lipoyl synthase">
    <location>
        <begin position="1"/>
        <end position="286"/>
    </location>
</feature>
<feature type="domain" description="Radical SAM core" evidence="2">
    <location>
        <begin position="41"/>
        <end position="254"/>
    </location>
</feature>
<feature type="binding site" evidence="1">
    <location>
        <position position="29"/>
    </location>
    <ligand>
        <name>[4Fe-4S] cluster</name>
        <dbReference type="ChEBI" id="CHEBI:49883"/>
        <label>1</label>
    </ligand>
</feature>
<feature type="binding site" evidence="1">
    <location>
        <position position="34"/>
    </location>
    <ligand>
        <name>[4Fe-4S] cluster</name>
        <dbReference type="ChEBI" id="CHEBI:49883"/>
        <label>1</label>
    </ligand>
</feature>
<feature type="binding site" evidence="1">
    <location>
        <position position="40"/>
    </location>
    <ligand>
        <name>[4Fe-4S] cluster</name>
        <dbReference type="ChEBI" id="CHEBI:49883"/>
        <label>1</label>
    </ligand>
</feature>
<feature type="binding site" evidence="1">
    <location>
        <position position="55"/>
    </location>
    <ligand>
        <name>[4Fe-4S] cluster</name>
        <dbReference type="ChEBI" id="CHEBI:49883"/>
        <label>2</label>
        <note>4Fe-4S-S-AdoMet</note>
    </ligand>
</feature>
<feature type="binding site" evidence="1">
    <location>
        <position position="59"/>
    </location>
    <ligand>
        <name>[4Fe-4S] cluster</name>
        <dbReference type="ChEBI" id="CHEBI:49883"/>
        <label>2</label>
        <note>4Fe-4S-S-AdoMet</note>
    </ligand>
</feature>
<feature type="binding site" evidence="1">
    <location>
        <position position="62"/>
    </location>
    <ligand>
        <name>[4Fe-4S] cluster</name>
        <dbReference type="ChEBI" id="CHEBI:49883"/>
        <label>2</label>
        <note>4Fe-4S-S-AdoMet</note>
    </ligand>
</feature>
<feature type="binding site" evidence="1">
    <location>
        <position position="265"/>
    </location>
    <ligand>
        <name>[4Fe-4S] cluster</name>
        <dbReference type="ChEBI" id="CHEBI:49883"/>
        <label>1</label>
    </ligand>
</feature>
<sequence length="286" mass="32142">MKSEVVVRINENFKKLSRIVSEKGISTVCEEALCPNIMECWGSGTATFMIMGDICTRGCRFCYVKKGKPVLLDHEEPIKVAEAVREMGLDYVVITSVDRDDLADGGASHFSQVVKAVKEMNPDVIVEVLTPDFMGNKELVEKVIGSGVDVFAHNVETVRSLTPLVRDARASYEQSLRVLSYAKNVVKKSSILLGLGESLEEVVETMKDLRNVGVDILVLSQYMRPSIKQLEVKKRYNMEEYKELEKIAYSLGFSYVVALPHARTSYRAKEAYLRAMANVKNNNRWS</sequence>
<dbReference type="EC" id="2.8.1.8" evidence="1"/>
<dbReference type="EMBL" id="CP000077">
    <property type="protein sequence ID" value="AAY79725.1"/>
    <property type="molecule type" value="Genomic_DNA"/>
</dbReference>
<dbReference type="RefSeq" id="WP_011277227.1">
    <property type="nucleotide sequence ID" value="NC_007181.1"/>
</dbReference>
<dbReference type="SMR" id="Q4JBV4"/>
<dbReference type="STRING" id="330779.Saci_0309"/>
<dbReference type="GeneID" id="14550839"/>
<dbReference type="GeneID" id="78440660"/>
<dbReference type="KEGG" id="sai:Saci_0309"/>
<dbReference type="PATRIC" id="fig|330779.12.peg.305"/>
<dbReference type="eggNOG" id="arCOG00660">
    <property type="taxonomic scope" value="Archaea"/>
</dbReference>
<dbReference type="HOGENOM" id="CLU_033144_2_0_2"/>
<dbReference type="UniPathway" id="UPA00538">
    <property type="reaction ID" value="UER00593"/>
</dbReference>
<dbReference type="Proteomes" id="UP000001018">
    <property type="component" value="Chromosome"/>
</dbReference>
<dbReference type="GO" id="GO:0005737">
    <property type="term" value="C:cytoplasm"/>
    <property type="evidence" value="ECO:0007669"/>
    <property type="project" value="UniProtKB-SubCell"/>
</dbReference>
<dbReference type="GO" id="GO:0051539">
    <property type="term" value="F:4 iron, 4 sulfur cluster binding"/>
    <property type="evidence" value="ECO:0007669"/>
    <property type="project" value="UniProtKB-UniRule"/>
</dbReference>
<dbReference type="GO" id="GO:0016992">
    <property type="term" value="F:lipoate synthase activity"/>
    <property type="evidence" value="ECO:0007669"/>
    <property type="project" value="UniProtKB-UniRule"/>
</dbReference>
<dbReference type="GO" id="GO:0046872">
    <property type="term" value="F:metal ion binding"/>
    <property type="evidence" value="ECO:0007669"/>
    <property type="project" value="UniProtKB-KW"/>
</dbReference>
<dbReference type="CDD" id="cd01335">
    <property type="entry name" value="Radical_SAM"/>
    <property type="match status" value="1"/>
</dbReference>
<dbReference type="FunFam" id="3.20.20.70:FF:000186">
    <property type="entry name" value="Lipoyl synthase"/>
    <property type="match status" value="1"/>
</dbReference>
<dbReference type="Gene3D" id="3.20.20.70">
    <property type="entry name" value="Aldolase class I"/>
    <property type="match status" value="1"/>
</dbReference>
<dbReference type="HAMAP" id="MF_00206">
    <property type="entry name" value="Lipoyl_synth"/>
    <property type="match status" value="1"/>
</dbReference>
<dbReference type="InterPro" id="IPR013785">
    <property type="entry name" value="Aldolase_TIM"/>
</dbReference>
<dbReference type="InterPro" id="IPR006638">
    <property type="entry name" value="Elp3/MiaA/NifB-like_rSAM"/>
</dbReference>
<dbReference type="InterPro" id="IPR003698">
    <property type="entry name" value="Lipoyl_synth"/>
</dbReference>
<dbReference type="InterPro" id="IPR007197">
    <property type="entry name" value="rSAM"/>
</dbReference>
<dbReference type="NCBIfam" id="TIGR00510">
    <property type="entry name" value="lipA"/>
    <property type="match status" value="1"/>
</dbReference>
<dbReference type="NCBIfam" id="NF004019">
    <property type="entry name" value="PRK05481.1"/>
    <property type="match status" value="1"/>
</dbReference>
<dbReference type="NCBIfam" id="NF009544">
    <property type="entry name" value="PRK12928.1"/>
    <property type="match status" value="1"/>
</dbReference>
<dbReference type="PANTHER" id="PTHR10949">
    <property type="entry name" value="LIPOYL SYNTHASE"/>
    <property type="match status" value="1"/>
</dbReference>
<dbReference type="PANTHER" id="PTHR10949:SF0">
    <property type="entry name" value="LIPOYL SYNTHASE, MITOCHONDRIAL"/>
    <property type="match status" value="1"/>
</dbReference>
<dbReference type="Pfam" id="PF04055">
    <property type="entry name" value="Radical_SAM"/>
    <property type="match status" value="1"/>
</dbReference>
<dbReference type="PIRSF" id="PIRSF005963">
    <property type="entry name" value="Lipoyl_synth"/>
    <property type="match status" value="1"/>
</dbReference>
<dbReference type="SFLD" id="SFLDF00271">
    <property type="entry name" value="lipoyl_synthase"/>
    <property type="match status" value="1"/>
</dbReference>
<dbReference type="SFLD" id="SFLDS00029">
    <property type="entry name" value="Radical_SAM"/>
    <property type="match status" value="1"/>
</dbReference>
<dbReference type="SMART" id="SM00729">
    <property type="entry name" value="Elp3"/>
    <property type="match status" value="1"/>
</dbReference>
<dbReference type="SUPFAM" id="SSF102114">
    <property type="entry name" value="Radical SAM enzymes"/>
    <property type="match status" value="1"/>
</dbReference>
<dbReference type="PROSITE" id="PS51918">
    <property type="entry name" value="RADICAL_SAM"/>
    <property type="match status" value="1"/>
</dbReference>
<gene>
    <name evidence="1" type="primary">lipA</name>
    <name type="ordered locus">Saci_0309</name>
</gene>
<keyword id="KW-0004">4Fe-4S</keyword>
<keyword id="KW-0963">Cytoplasm</keyword>
<keyword id="KW-0408">Iron</keyword>
<keyword id="KW-0411">Iron-sulfur</keyword>
<keyword id="KW-0479">Metal-binding</keyword>
<keyword id="KW-1185">Reference proteome</keyword>
<keyword id="KW-0949">S-adenosyl-L-methionine</keyword>
<keyword id="KW-0808">Transferase</keyword>
<proteinExistence type="inferred from homology"/>
<evidence type="ECO:0000255" key="1">
    <source>
        <dbReference type="HAMAP-Rule" id="MF_00206"/>
    </source>
</evidence>
<evidence type="ECO:0000255" key="2">
    <source>
        <dbReference type="PROSITE-ProRule" id="PRU01266"/>
    </source>
</evidence>
<reference key="1">
    <citation type="journal article" date="2005" name="J. Bacteriol.">
        <title>The genome of Sulfolobus acidocaldarius, a model organism of the Crenarchaeota.</title>
        <authorList>
            <person name="Chen L."/>
            <person name="Bruegger K."/>
            <person name="Skovgaard M."/>
            <person name="Redder P."/>
            <person name="She Q."/>
            <person name="Torarinsson E."/>
            <person name="Greve B."/>
            <person name="Awayez M."/>
            <person name="Zibat A."/>
            <person name="Klenk H.-P."/>
            <person name="Garrett R.A."/>
        </authorList>
    </citation>
    <scope>NUCLEOTIDE SEQUENCE [LARGE SCALE GENOMIC DNA]</scope>
    <source>
        <strain>ATCC 33909 / DSM 639 / JCM 8929 / NBRC 15157 / NCIMB 11770</strain>
    </source>
</reference>
<comment type="function">
    <text evidence="1">Catalyzes the radical-mediated insertion of two sulfur atoms into the C-6 and C-8 positions of the octanoyl moiety bound to the lipoyl domains of lipoate-dependent enzymes, thereby converting the octanoylated domains into lipoylated derivatives.</text>
</comment>
<comment type="catalytic activity">
    <reaction evidence="1">
        <text>[[Fe-S] cluster scaffold protein carrying a second [4Fe-4S](2+) cluster] + N(6)-octanoyl-L-lysyl-[protein] + 2 oxidized [2Fe-2S]-[ferredoxin] + 2 S-adenosyl-L-methionine + 4 H(+) = [[Fe-S] cluster scaffold protein] + N(6)-[(R)-dihydrolipoyl]-L-lysyl-[protein] + 4 Fe(3+) + 2 hydrogen sulfide + 2 5'-deoxyadenosine + 2 L-methionine + 2 reduced [2Fe-2S]-[ferredoxin]</text>
        <dbReference type="Rhea" id="RHEA:16585"/>
        <dbReference type="Rhea" id="RHEA-COMP:9928"/>
        <dbReference type="Rhea" id="RHEA-COMP:10000"/>
        <dbReference type="Rhea" id="RHEA-COMP:10001"/>
        <dbReference type="Rhea" id="RHEA-COMP:10475"/>
        <dbReference type="Rhea" id="RHEA-COMP:14568"/>
        <dbReference type="Rhea" id="RHEA-COMP:14569"/>
        <dbReference type="ChEBI" id="CHEBI:15378"/>
        <dbReference type="ChEBI" id="CHEBI:17319"/>
        <dbReference type="ChEBI" id="CHEBI:29034"/>
        <dbReference type="ChEBI" id="CHEBI:29919"/>
        <dbReference type="ChEBI" id="CHEBI:33722"/>
        <dbReference type="ChEBI" id="CHEBI:33737"/>
        <dbReference type="ChEBI" id="CHEBI:33738"/>
        <dbReference type="ChEBI" id="CHEBI:57844"/>
        <dbReference type="ChEBI" id="CHEBI:59789"/>
        <dbReference type="ChEBI" id="CHEBI:78809"/>
        <dbReference type="ChEBI" id="CHEBI:83100"/>
        <dbReference type="EC" id="2.8.1.8"/>
    </reaction>
</comment>
<comment type="cofactor">
    <cofactor evidence="1">
        <name>[4Fe-4S] cluster</name>
        <dbReference type="ChEBI" id="CHEBI:49883"/>
    </cofactor>
    <text evidence="1">Binds 2 [4Fe-4S] clusters per subunit. One cluster is coordinated with 3 cysteines and an exchangeable S-adenosyl-L-methionine.</text>
</comment>
<comment type="pathway">
    <text evidence="1">Protein modification; protein lipoylation via endogenous pathway; protein N(6)-(lipoyl)lysine from octanoyl-[acyl-carrier-protein]: step 2/2.</text>
</comment>
<comment type="subcellular location">
    <subcellularLocation>
        <location evidence="1">Cytoplasm</location>
    </subcellularLocation>
</comment>
<comment type="similarity">
    <text evidence="1">Belongs to the radical SAM superfamily. Lipoyl synthase family.</text>
</comment>
<name>LIPA_SULAC</name>
<accession>Q4JBV4</accession>
<organism>
    <name type="scientific">Sulfolobus acidocaldarius (strain ATCC 33909 / DSM 639 / JCM 8929 / NBRC 15157 / NCIMB 11770)</name>
    <dbReference type="NCBI Taxonomy" id="330779"/>
    <lineage>
        <taxon>Archaea</taxon>
        <taxon>Thermoproteota</taxon>
        <taxon>Thermoprotei</taxon>
        <taxon>Sulfolobales</taxon>
        <taxon>Sulfolobaceae</taxon>
        <taxon>Sulfolobus</taxon>
    </lineage>
</organism>
<protein>
    <recommendedName>
        <fullName evidence="1">Lipoyl synthase</fullName>
        <ecNumber evidence="1">2.8.1.8</ecNumber>
    </recommendedName>
    <alternativeName>
        <fullName evidence="1">Lip-syn</fullName>
        <shortName evidence="1">LS</shortName>
    </alternativeName>
    <alternativeName>
        <fullName evidence="1">Lipoate synthase</fullName>
    </alternativeName>
    <alternativeName>
        <fullName evidence="1">Lipoic acid synthase</fullName>
    </alternativeName>
    <alternativeName>
        <fullName evidence="1">Sulfur insertion protein LipA</fullName>
    </alternativeName>
</protein>